<name>DISA_BACC7</name>
<reference key="1">
    <citation type="submission" date="2008-10" db="EMBL/GenBank/DDBJ databases">
        <title>Genome sequence of Bacillus cereus AH187.</title>
        <authorList>
            <person name="Dodson R.J."/>
            <person name="Durkin A.S."/>
            <person name="Rosovitz M.J."/>
            <person name="Rasko D.A."/>
            <person name="Kolsto A.B."/>
            <person name="Okstad O.A."/>
            <person name="Ravel J."/>
            <person name="Sutton G."/>
        </authorList>
    </citation>
    <scope>NUCLEOTIDE SEQUENCE [LARGE SCALE GENOMIC DNA]</scope>
    <source>
        <strain>AH187</strain>
    </source>
</reference>
<comment type="function">
    <text evidence="1">Participates in a DNA-damage check-point that is active prior to asymmetric division when DNA is damaged. DisA forms globular foci that rapidly scan along the chromosomes during sporulation, searching for lesions. When a lesion is present, DisA pauses at the lesion site. This triggers a cellular response that culminates in a temporary block in sporulation initiation.</text>
</comment>
<comment type="function">
    <text evidence="1">Also has diadenylate cyclase activity, catalyzing the condensation of 2 ATP molecules into cyclic di-AMP (c-di-AMP). c-di-AMP acts as a signaling molecule that couples DNA integrity with progression of sporulation. The rise in c-di-AMP level generated by DisA while scanning the chromosome, operates as a positive signal that advances sporulation; upon encountering a lesion, the DisA focus arrests at the damaged site and halts c-di-AMP synthesis.</text>
</comment>
<comment type="catalytic activity">
    <reaction evidence="1">
        <text>2 ATP = 3',3'-c-di-AMP + 2 diphosphate</text>
        <dbReference type="Rhea" id="RHEA:35655"/>
        <dbReference type="ChEBI" id="CHEBI:30616"/>
        <dbReference type="ChEBI" id="CHEBI:33019"/>
        <dbReference type="ChEBI" id="CHEBI:71500"/>
        <dbReference type="EC" id="2.7.7.85"/>
    </reaction>
</comment>
<comment type="cofactor">
    <cofactor evidence="1">
        <name>Mg(2+)</name>
        <dbReference type="ChEBI" id="CHEBI:18420"/>
    </cofactor>
</comment>
<comment type="subunit">
    <text evidence="1">Homooctamer.</text>
</comment>
<comment type="similarity">
    <text evidence="1">Belongs to the DisA family.</text>
</comment>
<feature type="chain" id="PRO_1000145855" description="DNA integrity scanning protein DisA">
    <location>
        <begin position="1"/>
        <end position="357"/>
    </location>
</feature>
<feature type="domain" description="DAC" evidence="2">
    <location>
        <begin position="8"/>
        <end position="146"/>
    </location>
</feature>
<feature type="binding site" evidence="1">
    <location>
        <position position="75"/>
    </location>
    <ligand>
        <name>ATP</name>
        <dbReference type="ChEBI" id="CHEBI:30616"/>
    </ligand>
</feature>
<feature type="binding site" evidence="1">
    <location>
        <position position="93"/>
    </location>
    <ligand>
        <name>ATP</name>
        <dbReference type="ChEBI" id="CHEBI:30616"/>
    </ligand>
</feature>
<feature type="binding site" evidence="1">
    <location>
        <begin position="106"/>
        <end position="110"/>
    </location>
    <ligand>
        <name>ATP</name>
        <dbReference type="ChEBI" id="CHEBI:30616"/>
    </ligand>
</feature>
<protein>
    <recommendedName>
        <fullName evidence="1">DNA integrity scanning protein DisA</fullName>
    </recommendedName>
    <alternativeName>
        <fullName evidence="1">Cyclic di-AMP synthase</fullName>
        <shortName evidence="1">c-di-AMP synthase</shortName>
    </alternativeName>
    <alternativeName>
        <fullName evidence="1">Diadenylate cyclase</fullName>
        <ecNumber evidence="1">2.7.7.85</ecNumber>
    </alternativeName>
</protein>
<gene>
    <name evidence="1" type="primary">disA</name>
    <name type="ordered locus">BCAH187_A0113</name>
</gene>
<proteinExistence type="inferred from homology"/>
<evidence type="ECO:0000255" key="1">
    <source>
        <dbReference type="HAMAP-Rule" id="MF_01438"/>
    </source>
</evidence>
<evidence type="ECO:0000255" key="2">
    <source>
        <dbReference type="PROSITE-ProRule" id="PRU01130"/>
    </source>
</evidence>
<sequence length="357" mass="40111">MEENKQRVKSMINILQLVAPGTPLREGIDNVLRAQTGGLIVLGYNEQIKSIVDGGFHINCAFSPASLYELAKMDGALILNETGSKILISNAQLVPESSIDSIETGMRHRTAERVAKQTGSLVVAISQRRNVITLYQGNLRYTLKDIGVILTKANQAIQTLEKYKAVWNDGITNLGILEFEEVVTMSEVVHVLHSVEMVLRIKNEILSYIHELGTEGRLIRLQLTELLADLEAEAALLIKDYYQEKTQDHHQILKKLQELANTQLLEDSDLVKLLGYPGQTSLEESVTPRGYRITSKISRVPPLIIENLINRFKTLQGVCRATINELDDVEGIGEVRAKKIREGLKRIQEHLYMSRHN</sequence>
<keyword id="KW-0067">ATP-binding</keyword>
<keyword id="KW-0227">DNA damage</keyword>
<keyword id="KW-0234">DNA repair</keyword>
<keyword id="KW-0238">DNA-binding</keyword>
<keyword id="KW-0460">Magnesium</keyword>
<keyword id="KW-0547">Nucleotide-binding</keyword>
<keyword id="KW-0548">Nucleotidyltransferase</keyword>
<keyword id="KW-0808">Transferase</keyword>
<dbReference type="EC" id="2.7.7.85" evidence="1"/>
<dbReference type="EMBL" id="CP001177">
    <property type="protein sequence ID" value="ACJ81738.1"/>
    <property type="molecule type" value="Genomic_DNA"/>
</dbReference>
<dbReference type="SMR" id="B7HQR7"/>
<dbReference type="KEGG" id="bcr:BCAH187_A0113"/>
<dbReference type="HOGENOM" id="CLU_787128_0_0_9"/>
<dbReference type="Proteomes" id="UP000002214">
    <property type="component" value="Chromosome"/>
</dbReference>
<dbReference type="GO" id="GO:0004016">
    <property type="term" value="F:adenylate cyclase activity"/>
    <property type="evidence" value="ECO:0007669"/>
    <property type="project" value="TreeGrafter"/>
</dbReference>
<dbReference type="GO" id="GO:0005524">
    <property type="term" value="F:ATP binding"/>
    <property type="evidence" value="ECO:0007669"/>
    <property type="project" value="UniProtKB-UniRule"/>
</dbReference>
<dbReference type="GO" id="GO:0106408">
    <property type="term" value="F:diadenylate cyclase activity"/>
    <property type="evidence" value="ECO:0007669"/>
    <property type="project" value="UniProtKB-EC"/>
</dbReference>
<dbReference type="GO" id="GO:0003677">
    <property type="term" value="F:DNA binding"/>
    <property type="evidence" value="ECO:0007669"/>
    <property type="project" value="UniProtKB-UniRule"/>
</dbReference>
<dbReference type="GO" id="GO:0006281">
    <property type="term" value="P:DNA repair"/>
    <property type="evidence" value="ECO:0007669"/>
    <property type="project" value="UniProtKB-UniRule"/>
</dbReference>
<dbReference type="FunFam" id="1.10.150.20:FF:000023">
    <property type="entry name" value="DNA integrity scanning protein DisA"/>
    <property type="match status" value="1"/>
</dbReference>
<dbReference type="FunFam" id="1.20.1260.110:FF:000001">
    <property type="entry name" value="DNA integrity scanning protein DisA"/>
    <property type="match status" value="1"/>
</dbReference>
<dbReference type="FunFam" id="3.40.1700.10:FF:000001">
    <property type="entry name" value="DNA integrity scanning protein DisA"/>
    <property type="match status" value="1"/>
</dbReference>
<dbReference type="Gene3D" id="1.10.150.20">
    <property type="entry name" value="5' to 3' exonuclease, C-terminal subdomain"/>
    <property type="match status" value="1"/>
</dbReference>
<dbReference type="Gene3D" id="1.20.1260.110">
    <property type="entry name" value="DNA integrity scanning linker region"/>
    <property type="match status" value="1"/>
</dbReference>
<dbReference type="Gene3D" id="3.40.1700.10">
    <property type="entry name" value="DNA integrity scanning protein, DisA, N-terminal domain"/>
    <property type="match status" value="1"/>
</dbReference>
<dbReference type="HAMAP" id="MF_01438">
    <property type="entry name" value="DisA"/>
    <property type="match status" value="1"/>
</dbReference>
<dbReference type="InterPro" id="IPR050338">
    <property type="entry name" value="DisA"/>
</dbReference>
<dbReference type="InterPro" id="IPR038331">
    <property type="entry name" value="DisA_sf"/>
</dbReference>
<dbReference type="InterPro" id="IPR036888">
    <property type="entry name" value="DNA_integrity_DisA_N_sf"/>
</dbReference>
<dbReference type="InterPro" id="IPR018906">
    <property type="entry name" value="DNA_integrity_scan_DisA_link"/>
</dbReference>
<dbReference type="InterPro" id="IPR003390">
    <property type="entry name" value="DNA_integrity_scan_DisA_N"/>
</dbReference>
<dbReference type="InterPro" id="IPR023763">
    <property type="entry name" value="DNA_integrity_scanning_protein"/>
</dbReference>
<dbReference type="InterPro" id="IPR010994">
    <property type="entry name" value="RuvA_2-like"/>
</dbReference>
<dbReference type="NCBIfam" id="NF010009">
    <property type="entry name" value="PRK13482.1"/>
    <property type="match status" value="1"/>
</dbReference>
<dbReference type="PANTHER" id="PTHR34185">
    <property type="entry name" value="DIADENYLATE CYCLASE"/>
    <property type="match status" value="1"/>
</dbReference>
<dbReference type="PANTHER" id="PTHR34185:SF3">
    <property type="entry name" value="DNA INTEGRITY SCANNING PROTEIN DISA"/>
    <property type="match status" value="1"/>
</dbReference>
<dbReference type="Pfam" id="PF02457">
    <property type="entry name" value="DAC"/>
    <property type="match status" value="1"/>
</dbReference>
<dbReference type="Pfam" id="PF10635">
    <property type="entry name" value="DisA-linker"/>
    <property type="match status" value="1"/>
</dbReference>
<dbReference type="SUPFAM" id="SSF47781">
    <property type="entry name" value="RuvA domain 2-like"/>
    <property type="match status" value="1"/>
</dbReference>
<dbReference type="SUPFAM" id="SSF143597">
    <property type="entry name" value="YojJ-like"/>
    <property type="match status" value="1"/>
</dbReference>
<dbReference type="PROSITE" id="PS51794">
    <property type="entry name" value="DAC"/>
    <property type="match status" value="1"/>
</dbReference>
<organism>
    <name type="scientific">Bacillus cereus (strain AH187)</name>
    <dbReference type="NCBI Taxonomy" id="405534"/>
    <lineage>
        <taxon>Bacteria</taxon>
        <taxon>Bacillati</taxon>
        <taxon>Bacillota</taxon>
        <taxon>Bacilli</taxon>
        <taxon>Bacillales</taxon>
        <taxon>Bacillaceae</taxon>
        <taxon>Bacillus</taxon>
        <taxon>Bacillus cereus group</taxon>
    </lineage>
</organism>
<accession>B7HQR7</accession>